<protein>
    <recommendedName>
        <fullName evidence="2">Alkyl hydroperoxide reductase AhpD</fullName>
        <ecNumber evidence="2">1.11.1.28</ecNumber>
    </recommendedName>
    <alternativeName>
        <fullName evidence="2">Alkylhydroperoxidase AhpD</fullName>
    </alternativeName>
</protein>
<comment type="function">
    <text evidence="2">Antioxidant protein with alkyl hydroperoxidase activity. Required for the reduction of the AhpC active site cysteine residues and for the regeneration of the AhpC enzyme activity.</text>
</comment>
<comment type="catalytic activity">
    <reaction evidence="2">
        <text>N(6)-[(R)-dihydrolipoyl]-L-lysyl-[lipoyl-carrier protein] + a hydroperoxide = N(6)-[(R)-lipoyl]-L-lysyl-[lipoyl-carrier protein] + an alcohol + H2O</text>
        <dbReference type="Rhea" id="RHEA:62636"/>
        <dbReference type="Rhea" id="RHEA-COMP:10502"/>
        <dbReference type="Rhea" id="RHEA-COMP:16355"/>
        <dbReference type="ChEBI" id="CHEBI:15377"/>
        <dbReference type="ChEBI" id="CHEBI:30879"/>
        <dbReference type="ChEBI" id="CHEBI:35924"/>
        <dbReference type="ChEBI" id="CHEBI:83099"/>
        <dbReference type="ChEBI" id="CHEBI:83100"/>
        <dbReference type="EC" id="1.11.1.28"/>
    </reaction>
</comment>
<comment type="similarity">
    <text evidence="2">Belongs to the AhpD family.</text>
</comment>
<proteinExistence type="inferred from homology"/>
<reference key="1">
    <citation type="journal article" date="2015" name="Genome Announc.">
        <title>Complete genome sequence of Anaeromyxobacter sp. Fw109-5, an anaerobic, metal-reducing bacterium isolated from a contaminated subsurface environment.</title>
        <authorList>
            <person name="Hwang C."/>
            <person name="Copeland A."/>
            <person name="Lucas S."/>
            <person name="Lapidus A."/>
            <person name="Barry K."/>
            <person name="Glavina Del Rio T."/>
            <person name="Dalin E."/>
            <person name="Tice H."/>
            <person name="Pitluck S."/>
            <person name="Sims D."/>
            <person name="Brettin T."/>
            <person name="Bruce D.C."/>
            <person name="Detter J.C."/>
            <person name="Han C.S."/>
            <person name="Schmutz J."/>
            <person name="Larimer F.W."/>
            <person name="Land M.L."/>
            <person name="Hauser L.J."/>
            <person name="Kyrpides N."/>
            <person name="Lykidis A."/>
            <person name="Richardson P."/>
            <person name="Belieav A."/>
            <person name="Sanford R.A."/>
            <person name="Loeffler F.E."/>
            <person name="Fields M.W."/>
        </authorList>
    </citation>
    <scope>NUCLEOTIDE SEQUENCE [LARGE SCALE GENOMIC DNA]</scope>
    <source>
        <strain>Fw109-5</strain>
    </source>
</reference>
<dbReference type="EC" id="1.11.1.28" evidence="2"/>
<dbReference type="EMBL" id="CP000769">
    <property type="protein sequence ID" value="ABS26349.1"/>
    <property type="molecule type" value="Genomic_DNA"/>
</dbReference>
<dbReference type="RefSeq" id="WP_012096930.1">
    <property type="nucleotide sequence ID" value="NC_009675.1"/>
</dbReference>
<dbReference type="SMR" id="A7HCA3"/>
<dbReference type="STRING" id="404589.Anae109_2147"/>
<dbReference type="KEGG" id="afw:Anae109_2147"/>
<dbReference type="eggNOG" id="COG2128">
    <property type="taxonomic scope" value="Bacteria"/>
</dbReference>
<dbReference type="HOGENOM" id="CLU_105328_0_0_7"/>
<dbReference type="OrthoDB" id="9801997at2"/>
<dbReference type="Proteomes" id="UP000006382">
    <property type="component" value="Chromosome"/>
</dbReference>
<dbReference type="GO" id="GO:0008785">
    <property type="term" value="F:alkyl hydroperoxide reductase activity"/>
    <property type="evidence" value="ECO:0007669"/>
    <property type="project" value="UniProtKB-UniRule"/>
</dbReference>
<dbReference type="GO" id="GO:0015036">
    <property type="term" value="F:disulfide oxidoreductase activity"/>
    <property type="evidence" value="ECO:0007669"/>
    <property type="project" value="TreeGrafter"/>
</dbReference>
<dbReference type="GO" id="GO:0032843">
    <property type="term" value="F:hydroperoxide reductase activity"/>
    <property type="evidence" value="ECO:0007669"/>
    <property type="project" value="InterPro"/>
</dbReference>
<dbReference type="GO" id="GO:0051920">
    <property type="term" value="F:peroxiredoxin activity"/>
    <property type="evidence" value="ECO:0007669"/>
    <property type="project" value="InterPro"/>
</dbReference>
<dbReference type="GO" id="GO:0045454">
    <property type="term" value="P:cell redox homeostasis"/>
    <property type="evidence" value="ECO:0007669"/>
    <property type="project" value="TreeGrafter"/>
</dbReference>
<dbReference type="GO" id="GO:0006979">
    <property type="term" value="P:response to oxidative stress"/>
    <property type="evidence" value="ECO:0007669"/>
    <property type="project" value="InterPro"/>
</dbReference>
<dbReference type="Gene3D" id="1.20.1290.10">
    <property type="entry name" value="AhpD-like"/>
    <property type="match status" value="1"/>
</dbReference>
<dbReference type="HAMAP" id="MF_01676">
    <property type="entry name" value="AhpD"/>
    <property type="match status" value="1"/>
</dbReference>
<dbReference type="InterPro" id="IPR004674">
    <property type="entry name" value="AhpD"/>
</dbReference>
<dbReference type="InterPro" id="IPR029032">
    <property type="entry name" value="AhpD-like"/>
</dbReference>
<dbReference type="InterPro" id="IPR004675">
    <property type="entry name" value="AhpD_core"/>
</dbReference>
<dbReference type="InterPro" id="IPR003779">
    <property type="entry name" value="CMD-like"/>
</dbReference>
<dbReference type="NCBIfam" id="TIGR00778">
    <property type="entry name" value="ahpD_dom"/>
    <property type="match status" value="1"/>
</dbReference>
<dbReference type="PANTHER" id="PTHR33930">
    <property type="entry name" value="ALKYL HYDROPEROXIDE REDUCTASE AHPD"/>
    <property type="match status" value="1"/>
</dbReference>
<dbReference type="PANTHER" id="PTHR33930:SF7">
    <property type="entry name" value="ALKYL HYDROPEROXIDE REDUCTASE AHPD"/>
    <property type="match status" value="1"/>
</dbReference>
<dbReference type="Pfam" id="PF02627">
    <property type="entry name" value="CMD"/>
    <property type="match status" value="1"/>
</dbReference>
<dbReference type="SUPFAM" id="SSF69118">
    <property type="entry name" value="AhpD-like"/>
    <property type="match status" value="1"/>
</dbReference>
<evidence type="ECO:0000250" key="1"/>
<evidence type="ECO:0000255" key="2">
    <source>
        <dbReference type="HAMAP-Rule" id="MF_01676"/>
    </source>
</evidence>
<accession>A7HCA3</accession>
<name>AHPD_ANADF</name>
<organism>
    <name type="scientific">Anaeromyxobacter sp. (strain Fw109-5)</name>
    <dbReference type="NCBI Taxonomy" id="404589"/>
    <lineage>
        <taxon>Bacteria</taxon>
        <taxon>Pseudomonadati</taxon>
        <taxon>Myxococcota</taxon>
        <taxon>Myxococcia</taxon>
        <taxon>Myxococcales</taxon>
        <taxon>Cystobacterineae</taxon>
        <taxon>Anaeromyxobacteraceae</taxon>
        <taxon>Anaeromyxobacter</taxon>
    </lineage>
</organism>
<keyword id="KW-0049">Antioxidant</keyword>
<keyword id="KW-1015">Disulfide bond</keyword>
<keyword id="KW-0560">Oxidoreductase</keyword>
<keyword id="KW-0575">Peroxidase</keyword>
<keyword id="KW-0676">Redox-active center</keyword>
<keyword id="KW-1185">Reference proteome</keyword>
<sequence>MSPVDRLREALPDAARDVRLNLQAVLQGGALTEGQRWGVAVASAAAARQPALLSAVLAEARSRGLDSAAEDGLAAAALMAMNNVYYRFRHMVGKPGYTEMPARLRMGRLAQPATSRADLELFSLAASAINGCEACVRTHEDVVVKGGIGEEAVHDAVRIAAVIHAAAVALEAGEVAGGHEAVSAA</sequence>
<feature type="chain" id="PRO_0000359469" description="Alkyl hydroperoxide reductase AhpD">
    <location>
        <begin position="1"/>
        <end position="185"/>
    </location>
</feature>
<feature type="active site" description="Proton donor" evidence="2">
    <location>
        <position position="132"/>
    </location>
</feature>
<feature type="active site" description="Cysteine sulfenic acid (-SOH) intermediate" evidence="2">
    <location>
        <position position="135"/>
    </location>
</feature>
<feature type="disulfide bond" evidence="1">
    <location>
        <begin position="132"/>
        <end position="135"/>
    </location>
</feature>
<feature type="disulfide bond" description="Interchain (with AhpC); in linked form" evidence="2">
    <location>
        <position position="135"/>
    </location>
</feature>
<gene>
    <name evidence="2" type="primary">ahpD</name>
    <name type="ordered locus">Anae109_2147</name>
</gene>